<organism>
    <name type="scientific">Methanosphaera stadtmanae (strain ATCC 43021 / DSM 3091 / JCM 11832 / MCB-3)</name>
    <dbReference type="NCBI Taxonomy" id="339860"/>
    <lineage>
        <taxon>Archaea</taxon>
        <taxon>Methanobacteriati</taxon>
        <taxon>Methanobacteriota</taxon>
        <taxon>Methanomada group</taxon>
        <taxon>Methanobacteria</taxon>
        <taxon>Methanobacteriales</taxon>
        <taxon>Methanobacteriaceae</taxon>
        <taxon>Methanosphaera</taxon>
    </lineage>
</organism>
<dbReference type="EMBL" id="CP000102">
    <property type="protein sequence ID" value="ABC57384.1"/>
    <property type="molecule type" value="Genomic_DNA"/>
</dbReference>
<dbReference type="RefSeq" id="WP_011406583.1">
    <property type="nucleotide sequence ID" value="NC_007681.1"/>
</dbReference>
<dbReference type="STRING" id="339860.Msp_0996"/>
<dbReference type="KEGG" id="mst:Msp_0996"/>
<dbReference type="eggNOG" id="arCOG04477">
    <property type="taxonomic scope" value="Archaea"/>
</dbReference>
<dbReference type="HOGENOM" id="CLU_121764_0_0_2"/>
<dbReference type="OrthoDB" id="24613at2157"/>
<dbReference type="Proteomes" id="UP000001931">
    <property type="component" value="Chromosome"/>
</dbReference>
<dbReference type="HAMAP" id="MF_00498">
    <property type="entry name" value="UPF0179"/>
    <property type="match status" value="1"/>
</dbReference>
<dbReference type="InterPro" id="IPR005369">
    <property type="entry name" value="UPF0179"/>
</dbReference>
<dbReference type="PANTHER" id="PTHR40699">
    <property type="entry name" value="UPF0179 PROTEIN MJ1627"/>
    <property type="match status" value="1"/>
</dbReference>
<dbReference type="PANTHER" id="PTHR40699:SF1">
    <property type="entry name" value="UPF0179 PROTEIN MJ1627"/>
    <property type="match status" value="1"/>
</dbReference>
<dbReference type="Pfam" id="PF03684">
    <property type="entry name" value="UPF0179"/>
    <property type="match status" value="1"/>
</dbReference>
<dbReference type="PIRSF" id="PIRSF006595">
    <property type="entry name" value="UCP006595"/>
    <property type="match status" value="1"/>
</dbReference>
<feature type="chain" id="PRO_0000378130" description="UPF0179 protein Msp_0996">
    <location>
        <begin position="1"/>
        <end position="140"/>
    </location>
</feature>
<evidence type="ECO:0000255" key="1">
    <source>
        <dbReference type="HAMAP-Rule" id="MF_00498"/>
    </source>
</evidence>
<comment type="similarity">
    <text evidence="1">Belongs to the UPF0179 family.</text>
</comment>
<keyword id="KW-1185">Reference proteome</keyword>
<accession>Q2NFL9</accession>
<reference key="1">
    <citation type="journal article" date="2006" name="J. Bacteriol.">
        <title>The genome sequence of Methanosphaera stadtmanae reveals why this human intestinal archaeon is restricted to methanol and H2 for methane formation and ATP synthesis.</title>
        <authorList>
            <person name="Fricke W.F."/>
            <person name="Seedorf H."/>
            <person name="Henne A."/>
            <person name="Kruer M."/>
            <person name="Liesegang H."/>
            <person name="Hedderich R."/>
            <person name="Gottschalk G."/>
            <person name="Thauer R.K."/>
        </authorList>
    </citation>
    <scope>NUCLEOTIDE SEQUENCE [LARGE SCALE GENOMIC DNA]</scope>
    <source>
        <strain>ATCC 43021 / DSM 3091 / JCM 11832 / MCB-3</strain>
    </source>
</reference>
<name>Y996_METST</name>
<gene>
    <name type="ordered locus">Msp_0996</name>
</gene>
<sequence>MITLIGTSLAKKGLVFIFYGGSSKCESCRFNRTCLNLEKGRKYIITNVKKVTHKCPLHKNGRVQTVEVEPATIRTAVETKKAYKGSTIIFRNPTCVCECENHDICYPEGLYNDDKCQIEEIGPELVCKNGRNLTEVILSH</sequence>
<proteinExistence type="inferred from homology"/>
<protein>
    <recommendedName>
        <fullName evidence="1">UPF0179 protein Msp_0996</fullName>
    </recommendedName>
</protein>